<dbReference type="EMBL" id="GU146050">
    <property type="protein sequence ID" value="ACZ34294.1"/>
    <property type="molecule type" value="mRNA"/>
</dbReference>
<dbReference type="SMR" id="D1MGU1"/>
<dbReference type="GO" id="GO:0005576">
    <property type="term" value="C:extracellular region"/>
    <property type="evidence" value="ECO:0000314"/>
    <property type="project" value="UniProtKB"/>
</dbReference>
<dbReference type="GO" id="GO:0044218">
    <property type="term" value="C:other organism cell membrane"/>
    <property type="evidence" value="ECO:0000314"/>
    <property type="project" value="UniProtKB"/>
</dbReference>
<dbReference type="GO" id="GO:0090729">
    <property type="term" value="F:toxin activity"/>
    <property type="evidence" value="ECO:0007669"/>
    <property type="project" value="UniProtKB-KW"/>
</dbReference>
<dbReference type="GO" id="GO:0044477">
    <property type="term" value="P:venom-mediated suppression of platelet aggregation"/>
    <property type="evidence" value="ECO:0000314"/>
    <property type="project" value="UniProtKB"/>
</dbReference>
<dbReference type="FunFam" id="3.10.100.10:FF:000087">
    <property type="entry name" value="Snaclec rhodocetin subunit delta"/>
    <property type="match status" value="1"/>
</dbReference>
<dbReference type="Gene3D" id="3.10.100.10">
    <property type="entry name" value="Mannose-Binding Protein A, subunit A"/>
    <property type="match status" value="1"/>
</dbReference>
<dbReference type="InterPro" id="IPR001304">
    <property type="entry name" value="C-type_lectin-like"/>
</dbReference>
<dbReference type="InterPro" id="IPR016186">
    <property type="entry name" value="C-type_lectin-like/link_sf"/>
</dbReference>
<dbReference type="InterPro" id="IPR050111">
    <property type="entry name" value="C-type_lectin/snaclec_domain"/>
</dbReference>
<dbReference type="InterPro" id="IPR018378">
    <property type="entry name" value="C-type_lectin_CS"/>
</dbReference>
<dbReference type="InterPro" id="IPR016187">
    <property type="entry name" value="CTDL_fold"/>
</dbReference>
<dbReference type="PANTHER" id="PTHR22803">
    <property type="entry name" value="MANNOSE, PHOSPHOLIPASE, LECTIN RECEPTOR RELATED"/>
    <property type="match status" value="1"/>
</dbReference>
<dbReference type="Pfam" id="PF00059">
    <property type="entry name" value="Lectin_C"/>
    <property type="match status" value="1"/>
</dbReference>
<dbReference type="SMART" id="SM00034">
    <property type="entry name" value="CLECT"/>
    <property type="match status" value="1"/>
</dbReference>
<dbReference type="SUPFAM" id="SSF56436">
    <property type="entry name" value="C-type lectin-like"/>
    <property type="match status" value="1"/>
</dbReference>
<dbReference type="PROSITE" id="PS00615">
    <property type="entry name" value="C_TYPE_LECTIN_1"/>
    <property type="match status" value="1"/>
</dbReference>
<dbReference type="PROSITE" id="PS50041">
    <property type="entry name" value="C_TYPE_LECTIN_2"/>
    <property type="match status" value="1"/>
</dbReference>
<organism>
    <name type="scientific">Protobothrops jerdonii</name>
    <name type="common">Jerdon's pitviper</name>
    <name type="synonym">Trimeresurus jerdonii</name>
    <dbReference type="NCBI Taxonomy" id="242841"/>
    <lineage>
        <taxon>Eukaryota</taxon>
        <taxon>Metazoa</taxon>
        <taxon>Chordata</taxon>
        <taxon>Craniata</taxon>
        <taxon>Vertebrata</taxon>
        <taxon>Euteleostomi</taxon>
        <taxon>Lepidosauria</taxon>
        <taxon>Squamata</taxon>
        <taxon>Bifurcata</taxon>
        <taxon>Unidentata</taxon>
        <taxon>Episquamata</taxon>
        <taxon>Toxicofera</taxon>
        <taxon>Serpentes</taxon>
        <taxon>Colubroidea</taxon>
        <taxon>Viperidae</taxon>
        <taxon>Crotalinae</taxon>
        <taxon>Protobothrops</taxon>
    </lineage>
</organism>
<comment type="function">
    <text evidence="2">Snaclec that dose-dependently inhibits platelet aggregation induced by ristocetin or low-dose thrombin, but not by high-dose thrombin. Binds to GPIbalpha (GP1BA). In vivo, also dose-dependently induces thrombocytopenia of mice and platelet counts remains at very low level even after 18 hours intravenous injection.</text>
</comment>
<comment type="subunit">
    <text evidence="2">Heterodimer of subunits alpha and beta; disulfide-linked.</text>
</comment>
<comment type="subcellular location">
    <subcellularLocation>
        <location>Secreted</location>
    </subcellularLocation>
</comment>
<comment type="tissue specificity">
    <text>Expressed by the venom gland.</text>
</comment>
<comment type="miscellaneous">
    <text evidence="4">Negative results: does not induce platelet aggregation in either platelet rich plasma or washed platelets under high-dose conditions. Does not inhibit platelet aggregation induced by high-dose thrombin. Does not react with polyclonal anti-GPVI and anti-GPIIb antibodies (PubMed:21256857).</text>
</comment>
<comment type="similarity">
    <text evidence="3">Belongs to the snaclec family.</text>
</comment>
<name>SLB_PROJR</name>
<protein>
    <recommendedName>
        <fullName>Snaclec jerdonibitin subunit beta</fullName>
    </recommendedName>
    <alternativeName>
        <fullName>TJ-GPIb-bp subunit beta</fullName>
    </alternativeName>
</protein>
<feature type="signal peptide" evidence="2">
    <location>
        <begin position="1"/>
        <end position="23"/>
    </location>
</feature>
<feature type="chain" id="PRO_0000422431" description="Snaclec jerdonibitin subunit beta">
    <location>
        <begin position="24"/>
        <end position="146"/>
    </location>
</feature>
<feature type="domain" description="C-type lectin" evidence="1">
    <location>
        <begin position="32"/>
        <end position="143"/>
    </location>
</feature>
<feature type="disulfide bond" evidence="1">
    <location>
        <begin position="25"/>
        <end position="36"/>
    </location>
</feature>
<feature type="disulfide bond" evidence="1">
    <location>
        <begin position="53"/>
        <end position="142"/>
    </location>
</feature>
<feature type="disulfide bond" description="Interchain (with C-102 in alpha chain)" evidence="1">
    <location>
        <position position="98"/>
    </location>
</feature>
<feature type="disulfide bond" evidence="1">
    <location>
        <begin position="119"/>
        <end position="134"/>
    </location>
</feature>
<keyword id="KW-0903">Direct protein sequencing</keyword>
<keyword id="KW-1015">Disulfide bond</keyword>
<keyword id="KW-1199">Hemostasis impairing toxin</keyword>
<keyword id="KW-1201">Platelet aggregation inhibiting toxin</keyword>
<keyword id="KW-0964">Secreted</keyword>
<keyword id="KW-0732">Signal</keyword>
<keyword id="KW-0800">Toxin</keyword>
<reference key="1">
    <citation type="journal article" date="2011" name="Toxicon">
        <title>A novel platelet glycoprotein Ib-binding protein with human platelet aggregation-inhibiting activity from Trimeresurus jerdonii venom.</title>
        <authorList>
            <person name="Chen Z."/>
            <person name="Wu J."/>
            <person name="Zhang Y."/>
            <person name="Yang X."/>
            <person name="Yu G."/>
            <person name="Zhu S."/>
            <person name="Lee W."/>
            <person name="Lu Q."/>
            <person name="Zhang Y."/>
        </authorList>
    </citation>
    <scope>NUCLEOTIDE SEQUENCE [MRNA]</scope>
    <scope>PROTEIN SEQUENCE OF 24-45</scope>
    <scope>FUNCTION</scope>
    <scope>SUBUNIT</scope>
    <source>
        <tissue>Venom</tissue>
        <tissue>Venom gland</tissue>
    </source>
</reference>
<evidence type="ECO:0000255" key="1">
    <source>
        <dbReference type="PROSITE-ProRule" id="PRU00040"/>
    </source>
</evidence>
<evidence type="ECO:0000269" key="2">
    <source>
    </source>
</evidence>
<evidence type="ECO:0000305" key="3"/>
<evidence type="ECO:0000305" key="4">
    <source>
    </source>
</evidence>
<accession>D1MGU1</accession>
<sequence>MGRFIFVSFGLLVVFLSLSGTGADCPSDWSSYEGHCYRVFQQQMNWADAEKFCTQQRKESHLVSFESSEEVDFVVSKTFPILKENFVWIGLSNVWNGCRLQWSDGTELKYNAWSAESECIASKTTDNQWWSMDCSKTYPFVCKLIV</sequence>
<proteinExistence type="evidence at protein level"/>